<comment type="function">
    <text evidence="1">Transfers the 4'-phosphopantetheine moiety from coenzyme A to a Ser of acyl-carrier-protein.</text>
</comment>
<comment type="catalytic activity">
    <reaction evidence="1">
        <text>apo-[ACP] + CoA = holo-[ACP] + adenosine 3',5'-bisphosphate + H(+)</text>
        <dbReference type="Rhea" id="RHEA:12068"/>
        <dbReference type="Rhea" id="RHEA-COMP:9685"/>
        <dbReference type="Rhea" id="RHEA-COMP:9690"/>
        <dbReference type="ChEBI" id="CHEBI:15378"/>
        <dbReference type="ChEBI" id="CHEBI:29999"/>
        <dbReference type="ChEBI" id="CHEBI:57287"/>
        <dbReference type="ChEBI" id="CHEBI:58343"/>
        <dbReference type="ChEBI" id="CHEBI:64479"/>
        <dbReference type="EC" id="2.7.8.7"/>
    </reaction>
</comment>
<comment type="cofactor">
    <cofactor evidence="1">
        <name>Mg(2+)</name>
        <dbReference type="ChEBI" id="CHEBI:18420"/>
    </cofactor>
</comment>
<comment type="subcellular location">
    <subcellularLocation>
        <location evidence="1">Cytoplasm</location>
    </subcellularLocation>
</comment>
<comment type="similarity">
    <text evidence="1">Belongs to the P-Pant transferase superfamily. AcpS family.</text>
</comment>
<feature type="chain" id="PRO_1000093912" description="Holo-[acyl-carrier-protein] synthase">
    <location>
        <begin position="1"/>
        <end position="126"/>
    </location>
</feature>
<feature type="binding site" evidence="1">
    <location>
        <position position="9"/>
    </location>
    <ligand>
        <name>Mg(2+)</name>
        <dbReference type="ChEBI" id="CHEBI:18420"/>
    </ligand>
</feature>
<feature type="binding site" evidence="1">
    <location>
        <position position="58"/>
    </location>
    <ligand>
        <name>Mg(2+)</name>
        <dbReference type="ChEBI" id="CHEBI:18420"/>
    </ligand>
</feature>
<proteinExistence type="inferred from homology"/>
<gene>
    <name evidence="1" type="primary">acpS</name>
    <name type="ordered locus">SEN2557</name>
</gene>
<dbReference type="EC" id="2.7.8.7" evidence="1"/>
<dbReference type="EMBL" id="AM933172">
    <property type="protein sequence ID" value="CAR34139.1"/>
    <property type="molecule type" value="Genomic_DNA"/>
</dbReference>
<dbReference type="RefSeq" id="WP_000986043.1">
    <property type="nucleotide sequence ID" value="NC_011294.1"/>
</dbReference>
<dbReference type="SMR" id="B5QTU4"/>
<dbReference type="GeneID" id="66757004"/>
<dbReference type="KEGG" id="set:SEN2557"/>
<dbReference type="HOGENOM" id="CLU_089696_3_1_6"/>
<dbReference type="Proteomes" id="UP000000613">
    <property type="component" value="Chromosome"/>
</dbReference>
<dbReference type="GO" id="GO:0005737">
    <property type="term" value="C:cytoplasm"/>
    <property type="evidence" value="ECO:0007669"/>
    <property type="project" value="UniProtKB-SubCell"/>
</dbReference>
<dbReference type="GO" id="GO:0008897">
    <property type="term" value="F:holo-[acyl-carrier-protein] synthase activity"/>
    <property type="evidence" value="ECO:0007669"/>
    <property type="project" value="UniProtKB-UniRule"/>
</dbReference>
<dbReference type="GO" id="GO:0000287">
    <property type="term" value="F:magnesium ion binding"/>
    <property type="evidence" value="ECO:0007669"/>
    <property type="project" value="UniProtKB-UniRule"/>
</dbReference>
<dbReference type="GO" id="GO:0006633">
    <property type="term" value="P:fatty acid biosynthetic process"/>
    <property type="evidence" value="ECO:0007669"/>
    <property type="project" value="UniProtKB-UniRule"/>
</dbReference>
<dbReference type="FunFam" id="3.90.470.20:FF:000001">
    <property type="entry name" value="Holo-[acyl-carrier-protein] synthase"/>
    <property type="match status" value="1"/>
</dbReference>
<dbReference type="Gene3D" id="3.90.470.20">
    <property type="entry name" value="4'-phosphopantetheinyl transferase domain"/>
    <property type="match status" value="1"/>
</dbReference>
<dbReference type="HAMAP" id="MF_00101">
    <property type="entry name" value="AcpS"/>
    <property type="match status" value="1"/>
</dbReference>
<dbReference type="InterPro" id="IPR008278">
    <property type="entry name" value="4-PPantetheinyl_Trfase_dom"/>
</dbReference>
<dbReference type="InterPro" id="IPR037143">
    <property type="entry name" value="4-PPantetheinyl_Trfase_dom_sf"/>
</dbReference>
<dbReference type="InterPro" id="IPR002582">
    <property type="entry name" value="ACPS"/>
</dbReference>
<dbReference type="InterPro" id="IPR004568">
    <property type="entry name" value="Ppantetheine-prot_Trfase_dom"/>
</dbReference>
<dbReference type="NCBIfam" id="TIGR00516">
    <property type="entry name" value="acpS"/>
    <property type="match status" value="1"/>
</dbReference>
<dbReference type="NCBIfam" id="TIGR00556">
    <property type="entry name" value="pantethn_trn"/>
    <property type="match status" value="1"/>
</dbReference>
<dbReference type="Pfam" id="PF01648">
    <property type="entry name" value="ACPS"/>
    <property type="match status" value="1"/>
</dbReference>
<dbReference type="SUPFAM" id="SSF56214">
    <property type="entry name" value="4'-phosphopantetheinyl transferase"/>
    <property type="match status" value="1"/>
</dbReference>
<name>ACPS_SALEP</name>
<reference key="1">
    <citation type="journal article" date="2008" name="Genome Res.">
        <title>Comparative genome analysis of Salmonella enteritidis PT4 and Salmonella gallinarum 287/91 provides insights into evolutionary and host adaptation pathways.</title>
        <authorList>
            <person name="Thomson N.R."/>
            <person name="Clayton D.J."/>
            <person name="Windhorst D."/>
            <person name="Vernikos G."/>
            <person name="Davidson S."/>
            <person name="Churcher C."/>
            <person name="Quail M.A."/>
            <person name="Stevens M."/>
            <person name="Jones M.A."/>
            <person name="Watson M."/>
            <person name="Barron A."/>
            <person name="Layton A."/>
            <person name="Pickard D."/>
            <person name="Kingsley R.A."/>
            <person name="Bignell A."/>
            <person name="Clark L."/>
            <person name="Harris B."/>
            <person name="Ormond D."/>
            <person name="Abdellah Z."/>
            <person name="Brooks K."/>
            <person name="Cherevach I."/>
            <person name="Chillingworth T."/>
            <person name="Woodward J."/>
            <person name="Norberczak H."/>
            <person name="Lord A."/>
            <person name="Arrowsmith C."/>
            <person name="Jagels K."/>
            <person name="Moule S."/>
            <person name="Mungall K."/>
            <person name="Saunders M."/>
            <person name="Whitehead S."/>
            <person name="Chabalgoity J.A."/>
            <person name="Maskell D."/>
            <person name="Humphreys T."/>
            <person name="Roberts M."/>
            <person name="Barrow P.A."/>
            <person name="Dougan G."/>
            <person name="Parkhill J."/>
        </authorList>
    </citation>
    <scope>NUCLEOTIDE SEQUENCE [LARGE SCALE GENOMIC DNA]</scope>
    <source>
        <strain>P125109</strain>
    </source>
</reference>
<sequence length="126" mass="14070">MAILGLGTDIVEIARIEAVISRSGERLARRVLSDNEWAIWETHQQPVRFLAKRFAVKEAAAKAFGTGIRNGLAFNQFEVFNDELGKPRLRLWGEALTLAEKLGVAHMHVTLADERHYACATVILES</sequence>
<protein>
    <recommendedName>
        <fullName evidence="1">Holo-[acyl-carrier-protein] synthase</fullName>
        <shortName evidence="1">Holo-ACP synthase</shortName>
        <ecNumber evidence="1">2.7.8.7</ecNumber>
    </recommendedName>
    <alternativeName>
        <fullName evidence="1">4'-phosphopantetheinyl transferase AcpS</fullName>
    </alternativeName>
</protein>
<organism>
    <name type="scientific">Salmonella enteritidis PT4 (strain P125109)</name>
    <dbReference type="NCBI Taxonomy" id="550537"/>
    <lineage>
        <taxon>Bacteria</taxon>
        <taxon>Pseudomonadati</taxon>
        <taxon>Pseudomonadota</taxon>
        <taxon>Gammaproteobacteria</taxon>
        <taxon>Enterobacterales</taxon>
        <taxon>Enterobacteriaceae</taxon>
        <taxon>Salmonella</taxon>
    </lineage>
</organism>
<evidence type="ECO:0000255" key="1">
    <source>
        <dbReference type="HAMAP-Rule" id="MF_00101"/>
    </source>
</evidence>
<accession>B5QTU4</accession>
<keyword id="KW-0963">Cytoplasm</keyword>
<keyword id="KW-0275">Fatty acid biosynthesis</keyword>
<keyword id="KW-0276">Fatty acid metabolism</keyword>
<keyword id="KW-0444">Lipid biosynthesis</keyword>
<keyword id="KW-0443">Lipid metabolism</keyword>
<keyword id="KW-0460">Magnesium</keyword>
<keyword id="KW-0479">Metal-binding</keyword>
<keyword id="KW-0808">Transferase</keyword>